<dbReference type="EMBL" id="AAFI02000194">
    <property type="protein sequence ID" value="EAL61143.1"/>
    <property type="molecule type" value="Genomic_DNA"/>
</dbReference>
<dbReference type="RefSeq" id="XP_629567.1">
    <property type="nucleotide sequence ID" value="XM_629565.1"/>
</dbReference>
<dbReference type="SMR" id="Q54CV3"/>
<dbReference type="FunCoup" id="Q54CV3">
    <property type="interactions" value="166"/>
</dbReference>
<dbReference type="STRING" id="44689.Q54CV3"/>
<dbReference type="GlyGen" id="Q54CV3">
    <property type="glycosylation" value="1 site"/>
</dbReference>
<dbReference type="PaxDb" id="44689-DDB0184520"/>
<dbReference type="EnsemblProtists" id="EAL61143">
    <property type="protein sequence ID" value="EAL61143"/>
    <property type="gene ID" value="DDB_G0292680"/>
</dbReference>
<dbReference type="GeneID" id="8628827"/>
<dbReference type="KEGG" id="ddi:DDB_G0292680"/>
<dbReference type="dictyBase" id="DDB_G0292680"/>
<dbReference type="VEuPathDB" id="AmoebaDB:DDB_G0292680"/>
<dbReference type="eggNOG" id="KOG2701">
    <property type="taxonomic scope" value="Eukaryota"/>
</dbReference>
<dbReference type="HOGENOM" id="CLU_016588_0_0_1"/>
<dbReference type="InParanoid" id="Q54CV3"/>
<dbReference type="OMA" id="YERQEAP"/>
<dbReference type="PhylomeDB" id="Q54CV3"/>
<dbReference type="PRO" id="PR:Q54CV3"/>
<dbReference type="Proteomes" id="UP000002195">
    <property type="component" value="Chromosome 6"/>
</dbReference>
<dbReference type="GO" id="GO:0006893">
    <property type="term" value="P:Golgi to plasma membrane transport"/>
    <property type="evidence" value="ECO:0000318"/>
    <property type="project" value="GO_Central"/>
</dbReference>
<dbReference type="InterPro" id="IPR039116">
    <property type="entry name" value="CCDC93"/>
</dbReference>
<dbReference type="InterPro" id="IPR019159">
    <property type="entry name" value="CCDC93_CC"/>
</dbReference>
<dbReference type="InterPro" id="IPR048747">
    <property type="entry name" value="CCDC93_N"/>
</dbReference>
<dbReference type="PANTHER" id="PTHR16441:SF0">
    <property type="entry name" value="COILED-COIL DOMAIN-CONTAINING PROTEIN 93"/>
    <property type="match status" value="1"/>
</dbReference>
<dbReference type="PANTHER" id="PTHR16441">
    <property type="entry name" value="FIDIPIDINE"/>
    <property type="match status" value="1"/>
</dbReference>
<dbReference type="Pfam" id="PF09762">
    <property type="entry name" value="CCDC93_CC"/>
    <property type="match status" value="1"/>
</dbReference>
<dbReference type="Pfam" id="PF21673">
    <property type="entry name" value="CCDC93_N"/>
    <property type="match status" value="1"/>
</dbReference>
<protein>
    <recommendedName>
        <fullName>Coiled-coil domain-containing protein 93 homolog</fullName>
    </recommendedName>
</protein>
<name>CCD93_DICDI</name>
<sequence>MEKRKSIFFANDSEDNTSSGDLSSFTKRGTITPGKIANAREGELSQMIDVESEQKYQEIIELLVTGGYFRARISGLSPFDKVVGGMAWSITASNVDVDADLFFQENSNIKQKVSLSEELIKALNRMKCPFPLQAQHITLLNYITLFPIIRWLITKVIETREETGDLLRMYSISMFSKDYIAPIDEDMKKSLNESCDFIESVEKRYKPTRKFKRANNTKSTPTQTLLEYGKLHRISRLPTNINENKEAAQKLESQLSGKDGSGKDTTEAEREEEEKRIKQMMKGMKGVEGDALSKVSGGVLKSFLPSEEITNLSERYGDMSDLGGAEGAKMMAEKLHRQKITNLEKLIQQKNQELEQIINAHSERQTELEQLQLLVGKKQAFNERIIRETEKLDALETPENTKALQALRSLVLLNETLIAQEELFKQSCKRQMVEYKQKIEQLLSQDASTQEDLQDSDRQQQIQQAFDSDIGKLKKLKLLLNKKNRDISLIQRYLDELPSRAELLQYQRQFVELSEQSSSKLTETRQYYTTYNTFEDKKTLLENELSILNSIQSKYSIAMSSTNNKELFIKSMDQIIDGIQQVLDKSENKWNVEKVRHDTLSDQYMTLLDQERNYYKLTKDFEEECRKNELLIKKLNELQ</sequence>
<evidence type="ECO:0000255" key="1"/>
<evidence type="ECO:0000256" key="2">
    <source>
        <dbReference type="SAM" id="MobiDB-lite"/>
    </source>
</evidence>
<evidence type="ECO:0000305" key="3"/>
<proteinExistence type="inferred from homology"/>
<comment type="similarity">
    <text evidence="3">Belongs to the CCDC93 family.</text>
</comment>
<organism>
    <name type="scientific">Dictyostelium discoideum</name>
    <name type="common">Social amoeba</name>
    <dbReference type="NCBI Taxonomy" id="44689"/>
    <lineage>
        <taxon>Eukaryota</taxon>
        <taxon>Amoebozoa</taxon>
        <taxon>Evosea</taxon>
        <taxon>Eumycetozoa</taxon>
        <taxon>Dictyostelia</taxon>
        <taxon>Dictyosteliales</taxon>
        <taxon>Dictyosteliaceae</taxon>
        <taxon>Dictyostelium</taxon>
    </lineage>
</organism>
<feature type="chain" id="PRO_0000356844" description="Coiled-coil domain-containing protein 93 homolog">
    <location>
        <begin position="1"/>
        <end position="639"/>
    </location>
</feature>
<feature type="region of interest" description="Disordered" evidence="2">
    <location>
        <begin position="250"/>
        <end position="275"/>
    </location>
</feature>
<feature type="coiled-coil region" evidence="1">
    <location>
        <begin position="332"/>
        <end position="492"/>
    </location>
</feature>
<feature type="compositionally biased region" description="Basic and acidic residues" evidence="2">
    <location>
        <begin position="260"/>
        <end position="275"/>
    </location>
</feature>
<gene>
    <name type="ORF">DDB_G0292680</name>
</gene>
<accession>Q54CV3</accession>
<keyword id="KW-0175">Coiled coil</keyword>
<keyword id="KW-1185">Reference proteome</keyword>
<reference key="1">
    <citation type="journal article" date="2005" name="Nature">
        <title>The genome of the social amoeba Dictyostelium discoideum.</title>
        <authorList>
            <person name="Eichinger L."/>
            <person name="Pachebat J.A."/>
            <person name="Gloeckner G."/>
            <person name="Rajandream M.A."/>
            <person name="Sucgang R."/>
            <person name="Berriman M."/>
            <person name="Song J."/>
            <person name="Olsen R."/>
            <person name="Szafranski K."/>
            <person name="Xu Q."/>
            <person name="Tunggal B."/>
            <person name="Kummerfeld S."/>
            <person name="Madera M."/>
            <person name="Konfortov B.A."/>
            <person name="Rivero F."/>
            <person name="Bankier A.T."/>
            <person name="Lehmann R."/>
            <person name="Hamlin N."/>
            <person name="Davies R."/>
            <person name="Gaudet P."/>
            <person name="Fey P."/>
            <person name="Pilcher K."/>
            <person name="Chen G."/>
            <person name="Saunders D."/>
            <person name="Sodergren E.J."/>
            <person name="Davis P."/>
            <person name="Kerhornou A."/>
            <person name="Nie X."/>
            <person name="Hall N."/>
            <person name="Anjard C."/>
            <person name="Hemphill L."/>
            <person name="Bason N."/>
            <person name="Farbrother P."/>
            <person name="Desany B."/>
            <person name="Just E."/>
            <person name="Morio T."/>
            <person name="Rost R."/>
            <person name="Churcher C.M."/>
            <person name="Cooper J."/>
            <person name="Haydock S."/>
            <person name="van Driessche N."/>
            <person name="Cronin A."/>
            <person name="Goodhead I."/>
            <person name="Muzny D.M."/>
            <person name="Mourier T."/>
            <person name="Pain A."/>
            <person name="Lu M."/>
            <person name="Harper D."/>
            <person name="Lindsay R."/>
            <person name="Hauser H."/>
            <person name="James K.D."/>
            <person name="Quiles M."/>
            <person name="Madan Babu M."/>
            <person name="Saito T."/>
            <person name="Buchrieser C."/>
            <person name="Wardroper A."/>
            <person name="Felder M."/>
            <person name="Thangavelu M."/>
            <person name="Johnson D."/>
            <person name="Knights A."/>
            <person name="Loulseged H."/>
            <person name="Mungall K.L."/>
            <person name="Oliver K."/>
            <person name="Price C."/>
            <person name="Quail M.A."/>
            <person name="Urushihara H."/>
            <person name="Hernandez J."/>
            <person name="Rabbinowitsch E."/>
            <person name="Steffen D."/>
            <person name="Sanders M."/>
            <person name="Ma J."/>
            <person name="Kohara Y."/>
            <person name="Sharp S."/>
            <person name="Simmonds M.N."/>
            <person name="Spiegler S."/>
            <person name="Tivey A."/>
            <person name="Sugano S."/>
            <person name="White B."/>
            <person name="Walker D."/>
            <person name="Woodward J.R."/>
            <person name="Winckler T."/>
            <person name="Tanaka Y."/>
            <person name="Shaulsky G."/>
            <person name="Schleicher M."/>
            <person name="Weinstock G.M."/>
            <person name="Rosenthal A."/>
            <person name="Cox E.C."/>
            <person name="Chisholm R.L."/>
            <person name="Gibbs R.A."/>
            <person name="Loomis W.F."/>
            <person name="Platzer M."/>
            <person name="Kay R.R."/>
            <person name="Williams J.G."/>
            <person name="Dear P.H."/>
            <person name="Noegel A.A."/>
            <person name="Barrell B.G."/>
            <person name="Kuspa A."/>
        </authorList>
    </citation>
    <scope>NUCLEOTIDE SEQUENCE [LARGE SCALE GENOMIC DNA]</scope>
    <source>
        <strain>AX4</strain>
    </source>
</reference>